<reference key="1">
    <citation type="journal article" date="2008" name="BMC Genomics">
        <title>Comparative genomic analysis of the gut bacterium Bifidobacterium longum reveals loci susceptible to deletion during pure culture growth.</title>
        <authorList>
            <person name="Lee J.H."/>
            <person name="Karamychev V.N."/>
            <person name="Kozyavkin S.A."/>
            <person name="Mills D."/>
            <person name="Pavlov A.R."/>
            <person name="Pavlova N.V."/>
            <person name="Polouchine N.N."/>
            <person name="Richardson P.M."/>
            <person name="Shakhova V.V."/>
            <person name="Slesarev A.I."/>
            <person name="Weimer B."/>
            <person name="O'Sullivan D.J."/>
        </authorList>
    </citation>
    <scope>NUCLEOTIDE SEQUENCE [LARGE SCALE GENOMIC DNA]</scope>
    <source>
        <strain>DJO10A</strain>
    </source>
</reference>
<organism>
    <name type="scientific">Bifidobacterium longum (strain DJO10A)</name>
    <dbReference type="NCBI Taxonomy" id="205913"/>
    <lineage>
        <taxon>Bacteria</taxon>
        <taxon>Bacillati</taxon>
        <taxon>Actinomycetota</taxon>
        <taxon>Actinomycetes</taxon>
        <taxon>Bifidobacteriales</taxon>
        <taxon>Bifidobacteriaceae</taxon>
        <taxon>Bifidobacterium</taxon>
    </lineage>
</organism>
<accession>B3DTU0</accession>
<protein>
    <recommendedName>
        <fullName evidence="1">Glycerol-3-phosphate dehydrogenase [NAD(P)+]</fullName>
        <ecNumber evidence="1">1.1.1.94</ecNumber>
    </recommendedName>
    <alternativeName>
        <fullName evidence="1">NAD(P)(+)-dependent glycerol-3-phosphate dehydrogenase</fullName>
    </alternativeName>
    <alternativeName>
        <fullName evidence="1">NAD(P)H-dependent dihydroxyacetone-phosphate reductase</fullName>
    </alternativeName>
</protein>
<sequence>MGKNITVLGAGAWGTAFGQVLADAGNTVTMWAKEQQIVEGIRDHHHNAVRLPSVEKLPDNMTATGDRAEAVKNADIVVVAIAAQFARVALVEFKGLIPDHAIVVSLMKGIERGTNKRMDEVVRESLDLPADRFAAISGPNLSKEIADRHPAATVVACTNLDNATKVAEACTTSYFKPFVTTDVIGLEMCGSLKNVTALAVGMARGAGYGENTAAMIETRGLAELTALGVAAGADPKTFFGLAGVGDLIATCGSSLSRNYTFGANLGKGLTVEEATKVSNGVAEGVPTTDAVVALGNQLDVPTPLAYQMSRVLNEGISCSEMLAGLFGHEVTGE</sequence>
<name>GPDA_BIFLD</name>
<dbReference type="EC" id="1.1.1.94" evidence="1"/>
<dbReference type="EMBL" id="CP000605">
    <property type="protein sequence ID" value="ACD98559.1"/>
    <property type="molecule type" value="Genomic_DNA"/>
</dbReference>
<dbReference type="RefSeq" id="WP_012472002.1">
    <property type="nucleotide sequence ID" value="NZ_AABM02000027.1"/>
</dbReference>
<dbReference type="SMR" id="B3DTU0"/>
<dbReference type="KEGG" id="blj:BLD_1113"/>
<dbReference type="HOGENOM" id="CLU_033449_0_2_11"/>
<dbReference type="UniPathway" id="UPA00940"/>
<dbReference type="Proteomes" id="UP000002419">
    <property type="component" value="Chromosome"/>
</dbReference>
<dbReference type="GO" id="GO:0005829">
    <property type="term" value="C:cytosol"/>
    <property type="evidence" value="ECO:0007669"/>
    <property type="project" value="TreeGrafter"/>
</dbReference>
<dbReference type="GO" id="GO:0047952">
    <property type="term" value="F:glycerol-3-phosphate dehydrogenase [NAD(P)+] activity"/>
    <property type="evidence" value="ECO:0007669"/>
    <property type="project" value="UniProtKB-UniRule"/>
</dbReference>
<dbReference type="GO" id="GO:0051287">
    <property type="term" value="F:NAD binding"/>
    <property type="evidence" value="ECO:0007669"/>
    <property type="project" value="InterPro"/>
</dbReference>
<dbReference type="GO" id="GO:0005975">
    <property type="term" value="P:carbohydrate metabolic process"/>
    <property type="evidence" value="ECO:0007669"/>
    <property type="project" value="InterPro"/>
</dbReference>
<dbReference type="GO" id="GO:0046167">
    <property type="term" value="P:glycerol-3-phosphate biosynthetic process"/>
    <property type="evidence" value="ECO:0007669"/>
    <property type="project" value="UniProtKB-UniRule"/>
</dbReference>
<dbReference type="GO" id="GO:0046168">
    <property type="term" value="P:glycerol-3-phosphate catabolic process"/>
    <property type="evidence" value="ECO:0007669"/>
    <property type="project" value="InterPro"/>
</dbReference>
<dbReference type="GO" id="GO:0006650">
    <property type="term" value="P:glycerophospholipid metabolic process"/>
    <property type="evidence" value="ECO:0007669"/>
    <property type="project" value="UniProtKB-UniRule"/>
</dbReference>
<dbReference type="GO" id="GO:0008654">
    <property type="term" value="P:phospholipid biosynthetic process"/>
    <property type="evidence" value="ECO:0007669"/>
    <property type="project" value="UniProtKB-KW"/>
</dbReference>
<dbReference type="FunFam" id="3.40.50.720:FF:000019">
    <property type="entry name" value="Glycerol-3-phosphate dehydrogenase [NAD(P)+]"/>
    <property type="match status" value="1"/>
</dbReference>
<dbReference type="Gene3D" id="1.10.1040.10">
    <property type="entry name" value="N-(1-d-carboxylethyl)-l-norvaline Dehydrogenase, domain 2"/>
    <property type="match status" value="1"/>
</dbReference>
<dbReference type="Gene3D" id="3.40.50.720">
    <property type="entry name" value="NAD(P)-binding Rossmann-like Domain"/>
    <property type="match status" value="1"/>
</dbReference>
<dbReference type="HAMAP" id="MF_00394">
    <property type="entry name" value="NAD_Glyc3P_dehydrog"/>
    <property type="match status" value="1"/>
</dbReference>
<dbReference type="InterPro" id="IPR008927">
    <property type="entry name" value="6-PGluconate_DH-like_C_sf"/>
</dbReference>
<dbReference type="InterPro" id="IPR013328">
    <property type="entry name" value="6PGD_dom2"/>
</dbReference>
<dbReference type="InterPro" id="IPR006168">
    <property type="entry name" value="G3P_DH_NAD-dep"/>
</dbReference>
<dbReference type="InterPro" id="IPR006109">
    <property type="entry name" value="G3P_DH_NAD-dep_C"/>
</dbReference>
<dbReference type="InterPro" id="IPR011128">
    <property type="entry name" value="G3P_DH_NAD-dep_N"/>
</dbReference>
<dbReference type="InterPro" id="IPR036291">
    <property type="entry name" value="NAD(P)-bd_dom_sf"/>
</dbReference>
<dbReference type="NCBIfam" id="NF000940">
    <property type="entry name" value="PRK00094.1-2"/>
    <property type="match status" value="1"/>
</dbReference>
<dbReference type="NCBIfam" id="NF000942">
    <property type="entry name" value="PRK00094.1-4"/>
    <property type="match status" value="1"/>
</dbReference>
<dbReference type="PANTHER" id="PTHR11728">
    <property type="entry name" value="GLYCEROL-3-PHOSPHATE DEHYDROGENASE"/>
    <property type="match status" value="1"/>
</dbReference>
<dbReference type="PANTHER" id="PTHR11728:SF1">
    <property type="entry name" value="GLYCEROL-3-PHOSPHATE DEHYDROGENASE [NAD(+)] 2, CHLOROPLASTIC"/>
    <property type="match status" value="1"/>
</dbReference>
<dbReference type="Pfam" id="PF07479">
    <property type="entry name" value="NAD_Gly3P_dh_C"/>
    <property type="match status" value="1"/>
</dbReference>
<dbReference type="Pfam" id="PF01210">
    <property type="entry name" value="NAD_Gly3P_dh_N"/>
    <property type="match status" value="1"/>
</dbReference>
<dbReference type="PIRSF" id="PIRSF000114">
    <property type="entry name" value="Glycerol-3-P_dh"/>
    <property type="match status" value="1"/>
</dbReference>
<dbReference type="PRINTS" id="PR00077">
    <property type="entry name" value="GPDHDRGNASE"/>
</dbReference>
<dbReference type="SUPFAM" id="SSF48179">
    <property type="entry name" value="6-phosphogluconate dehydrogenase C-terminal domain-like"/>
    <property type="match status" value="1"/>
</dbReference>
<dbReference type="SUPFAM" id="SSF51735">
    <property type="entry name" value="NAD(P)-binding Rossmann-fold domains"/>
    <property type="match status" value="1"/>
</dbReference>
<dbReference type="PROSITE" id="PS00957">
    <property type="entry name" value="NAD_G3PDH"/>
    <property type="match status" value="1"/>
</dbReference>
<comment type="function">
    <text evidence="1">Catalyzes the reduction of the glycolytic intermediate dihydroxyacetone phosphate (DHAP) to sn-glycerol 3-phosphate (G3P), the key precursor for phospholipid synthesis.</text>
</comment>
<comment type="catalytic activity">
    <reaction evidence="1">
        <text>sn-glycerol 3-phosphate + NAD(+) = dihydroxyacetone phosphate + NADH + H(+)</text>
        <dbReference type="Rhea" id="RHEA:11092"/>
        <dbReference type="ChEBI" id="CHEBI:15378"/>
        <dbReference type="ChEBI" id="CHEBI:57540"/>
        <dbReference type="ChEBI" id="CHEBI:57597"/>
        <dbReference type="ChEBI" id="CHEBI:57642"/>
        <dbReference type="ChEBI" id="CHEBI:57945"/>
        <dbReference type="EC" id="1.1.1.94"/>
    </reaction>
    <physiologicalReaction direction="right-to-left" evidence="1">
        <dbReference type="Rhea" id="RHEA:11094"/>
    </physiologicalReaction>
</comment>
<comment type="catalytic activity">
    <reaction evidence="1">
        <text>sn-glycerol 3-phosphate + NADP(+) = dihydroxyacetone phosphate + NADPH + H(+)</text>
        <dbReference type="Rhea" id="RHEA:11096"/>
        <dbReference type="ChEBI" id="CHEBI:15378"/>
        <dbReference type="ChEBI" id="CHEBI:57597"/>
        <dbReference type="ChEBI" id="CHEBI:57642"/>
        <dbReference type="ChEBI" id="CHEBI:57783"/>
        <dbReference type="ChEBI" id="CHEBI:58349"/>
        <dbReference type="EC" id="1.1.1.94"/>
    </reaction>
    <physiologicalReaction direction="right-to-left" evidence="1">
        <dbReference type="Rhea" id="RHEA:11098"/>
    </physiologicalReaction>
</comment>
<comment type="pathway">
    <text evidence="1">Membrane lipid metabolism; glycerophospholipid metabolism.</text>
</comment>
<comment type="subcellular location">
    <subcellularLocation>
        <location evidence="1">Cytoplasm</location>
    </subcellularLocation>
</comment>
<comment type="similarity">
    <text evidence="1">Belongs to the NAD-dependent glycerol-3-phosphate dehydrogenase family.</text>
</comment>
<gene>
    <name evidence="1" type="primary">gpsA</name>
    <name type="ordered locus">BLD_1113</name>
</gene>
<proteinExistence type="inferred from homology"/>
<evidence type="ECO:0000255" key="1">
    <source>
        <dbReference type="HAMAP-Rule" id="MF_00394"/>
    </source>
</evidence>
<keyword id="KW-0963">Cytoplasm</keyword>
<keyword id="KW-0444">Lipid biosynthesis</keyword>
<keyword id="KW-0443">Lipid metabolism</keyword>
<keyword id="KW-0520">NAD</keyword>
<keyword id="KW-0521">NADP</keyword>
<keyword id="KW-0547">Nucleotide-binding</keyword>
<keyword id="KW-0560">Oxidoreductase</keyword>
<keyword id="KW-0594">Phospholipid biosynthesis</keyword>
<keyword id="KW-1208">Phospholipid metabolism</keyword>
<feature type="chain" id="PRO_1000123122" description="Glycerol-3-phosphate dehydrogenase [NAD(P)+]">
    <location>
        <begin position="1"/>
        <end position="333"/>
    </location>
</feature>
<feature type="active site" description="Proton acceptor" evidence="1">
    <location>
        <position position="193"/>
    </location>
</feature>
<feature type="binding site" evidence="1">
    <location>
        <position position="13"/>
    </location>
    <ligand>
        <name>NADPH</name>
        <dbReference type="ChEBI" id="CHEBI:57783"/>
    </ligand>
</feature>
<feature type="binding site" evidence="1">
    <location>
        <position position="33"/>
    </location>
    <ligand>
        <name>NADPH</name>
        <dbReference type="ChEBI" id="CHEBI:57783"/>
    </ligand>
</feature>
<feature type="binding site" evidence="1">
    <location>
        <position position="108"/>
    </location>
    <ligand>
        <name>NADPH</name>
        <dbReference type="ChEBI" id="CHEBI:57783"/>
    </ligand>
</feature>
<feature type="binding site" evidence="1">
    <location>
        <position position="108"/>
    </location>
    <ligand>
        <name>sn-glycerol 3-phosphate</name>
        <dbReference type="ChEBI" id="CHEBI:57597"/>
    </ligand>
</feature>
<feature type="binding site" evidence="1">
    <location>
        <position position="138"/>
    </location>
    <ligand>
        <name>sn-glycerol 3-phosphate</name>
        <dbReference type="ChEBI" id="CHEBI:57597"/>
    </ligand>
</feature>
<feature type="binding site" evidence="1">
    <location>
        <position position="142"/>
    </location>
    <ligand>
        <name>NADPH</name>
        <dbReference type="ChEBI" id="CHEBI:57783"/>
    </ligand>
</feature>
<feature type="binding site" evidence="1">
    <location>
        <position position="193"/>
    </location>
    <ligand>
        <name>sn-glycerol 3-phosphate</name>
        <dbReference type="ChEBI" id="CHEBI:57597"/>
    </ligand>
</feature>
<feature type="binding site" evidence="1">
    <location>
        <position position="246"/>
    </location>
    <ligand>
        <name>sn-glycerol 3-phosphate</name>
        <dbReference type="ChEBI" id="CHEBI:57597"/>
    </ligand>
</feature>
<feature type="binding site" evidence="1">
    <location>
        <position position="256"/>
    </location>
    <ligand>
        <name>sn-glycerol 3-phosphate</name>
        <dbReference type="ChEBI" id="CHEBI:57597"/>
    </ligand>
</feature>
<feature type="binding site" evidence="1">
    <location>
        <position position="257"/>
    </location>
    <ligand>
        <name>NADPH</name>
        <dbReference type="ChEBI" id="CHEBI:57783"/>
    </ligand>
</feature>
<feature type="binding site" evidence="1">
    <location>
        <position position="257"/>
    </location>
    <ligand>
        <name>sn-glycerol 3-phosphate</name>
        <dbReference type="ChEBI" id="CHEBI:57597"/>
    </ligand>
</feature>
<feature type="binding site" evidence="1">
    <location>
        <position position="258"/>
    </location>
    <ligand>
        <name>sn-glycerol 3-phosphate</name>
        <dbReference type="ChEBI" id="CHEBI:57597"/>
    </ligand>
</feature>
<feature type="binding site" evidence="1">
    <location>
        <position position="281"/>
    </location>
    <ligand>
        <name>NADPH</name>
        <dbReference type="ChEBI" id="CHEBI:57783"/>
    </ligand>
</feature>
<feature type="binding site" evidence="1">
    <location>
        <position position="283"/>
    </location>
    <ligand>
        <name>NADPH</name>
        <dbReference type="ChEBI" id="CHEBI:57783"/>
    </ligand>
</feature>